<dbReference type="EMBL" id="CP000468">
    <property type="protein sequence ID" value="ABJ00439.1"/>
    <property type="molecule type" value="Genomic_DNA"/>
</dbReference>
<dbReference type="RefSeq" id="WP_000074171.1">
    <property type="nucleotide sequence ID" value="NZ_CADILS010000019.1"/>
</dbReference>
<dbReference type="SMR" id="A1A9U9"/>
<dbReference type="KEGG" id="ecv:APECO1_136"/>
<dbReference type="HOGENOM" id="CLU_001265_57_3_6"/>
<dbReference type="Proteomes" id="UP000008216">
    <property type="component" value="Chromosome"/>
</dbReference>
<dbReference type="GO" id="GO:0005886">
    <property type="term" value="C:plasma membrane"/>
    <property type="evidence" value="ECO:0007669"/>
    <property type="project" value="UniProtKB-SubCell"/>
</dbReference>
<dbReference type="GO" id="GO:0022857">
    <property type="term" value="F:transmembrane transporter activity"/>
    <property type="evidence" value="ECO:0007669"/>
    <property type="project" value="UniProtKB-UniRule"/>
</dbReference>
<dbReference type="GO" id="GO:0046677">
    <property type="term" value="P:response to antibiotic"/>
    <property type="evidence" value="ECO:0007669"/>
    <property type="project" value="UniProtKB-KW"/>
</dbReference>
<dbReference type="CDD" id="cd17391">
    <property type="entry name" value="MFS_MdtG_MDR_like"/>
    <property type="match status" value="1"/>
</dbReference>
<dbReference type="FunFam" id="1.20.1250.20:FF:000020">
    <property type="entry name" value="Multidrug resistance protein MdtG"/>
    <property type="match status" value="1"/>
</dbReference>
<dbReference type="FunFam" id="1.20.1250.20:FF:000022">
    <property type="entry name" value="Multidrug resistance protein MdtG"/>
    <property type="match status" value="1"/>
</dbReference>
<dbReference type="Gene3D" id="1.20.1250.20">
    <property type="entry name" value="MFS general substrate transporter like domains"/>
    <property type="match status" value="2"/>
</dbReference>
<dbReference type="HAMAP" id="MF_01528">
    <property type="entry name" value="MFS_MdtG"/>
    <property type="match status" value="1"/>
</dbReference>
<dbReference type="InterPro" id="IPR011701">
    <property type="entry name" value="MFS"/>
</dbReference>
<dbReference type="InterPro" id="IPR020846">
    <property type="entry name" value="MFS_dom"/>
</dbReference>
<dbReference type="InterPro" id="IPR050497">
    <property type="entry name" value="MFS_MdtG_subfamily"/>
</dbReference>
<dbReference type="InterPro" id="IPR036259">
    <property type="entry name" value="MFS_trans_sf"/>
</dbReference>
<dbReference type="InterPro" id="IPR023692">
    <property type="entry name" value="Mutidrug-R_MdtG"/>
</dbReference>
<dbReference type="InterPro" id="IPR001958">
    <property type="entry name" value="Tet-R_TetA/multi-R_MdtG-like"/>
</dbReference>
<dbReference type="NCBIfam" id="NF007372">
    <property type="entry name" value="PRK09874.1"/>
    <property type="match status" value="1"/>
</dbReference>
<dbReference type="PANTHER" id="PTHR43414">
    <property type="entry name" value="MULTIDRUG RESISTANCE PROTEIN MDTG"/>
    <property type="match status" value="1"/>
</dbReference>
<dbReference type="PANTHER" id="PTHR43414:SF6">
    <property type="entry name" value="MULTIDRUG RESISTANCE PROTEIN MDTG"/>
    <property type="match status" value="1"/>
</dbReference>
<dbReference type="Pfam" id="PF07690">
    <property type="entry name" value="MFS_1"/>
    <property type="match status" value="1"/>
</dbReference>
<dbReference type="PRINTS" id="PR01035">
    <property type="entry name" value="TCRTETA"/>
</dbReference>
<dbReference type="SUPFAM" id="SSF103473">
    <property type="entry name" value="MFS general substrate transporter"/>
    <property type="match status" value="1"/>
</dbReference>
<dbReference type="PROSITE" id="PS50850">
    <property type="entry name" value="MFS"/>
    <property type="match status" value="1"/>
</dbReference>
<evidence type="ECO:0000255" key="1">
    <source>
        <dbReference type="HAMAP-Rule" id="MF_01528"/>
    </source>
</evidence>
<organism>
    <name type="scientific">Escherichia coli O1:K1 / APEC</name>
    <dbReference type="NCBI Taxonomy" id="405955"/>
    <lineage>
        <taxon>Bacteria</taxon>
        <taxon>Pseudomonadati</taxon>
        <taxon>Pseudomonadota</taxon>
        <taxon>Gammaproteobacteria</taxon>
        <taxon>Enterobacterales</taxon>
        <taxon>Enterobacteriaceae</taxon>
        <taxon>Escherichia</taxon>
    </lineage>
</organism>
<name>MDTG_ECOK1</name>
<comment type="function">
    <text evidence="1">Confers resistance to fosfomycin and deoxycholate.</text>
</comment>
<comment type="subcellular location">
    <subcellularLocation>
        <location evidence="1">Cell inner membrane</location>
        <topology evidence="1">Multi-pass membrane protein</topology>
    </subcellularLocation>
</comment>
<comment type="similarity">
    <text evidence="1">Belongs to the major facilitator superfamily. DHA1 family. MdtG (TC 2.A.1.2.20) subfamily.</text>
</comment>
<accession>A1A9U9</accession>
<protein>
    <recommendedName>
        <fullName evidence="1">Multidrug resistance protein MdtG</fullName>
    </recommendedName>
</protein>
<gene>
    <name evidence="1" type="primary">mdtG</name>
    <name type="ordered locus">Ecok1_09450</name>
    <name type="ORF">APECO1_136</name>
</gene>
<feature type="chain" id="PRO_0000280211" description="Multidrug resistance protein MdtG">
    <location>
        <begin position="1"/>
        <end position="408"/>
    </location>
</feature>
<feature type="transmembrane region" description="Helical" evidence="1">
    <location>
        <begin position="16"/>
        <end position="36"/>
    </location>
</feature>
<feature type="transmembrane region" description="Helical" evidence="1">
    <location>
        <begin position="58"/>
        <end position="78"/>
    </location>
</feature>
<feature type="transmembrane region" description="Helical" evidence="1">
    <location>
        <begin position="92"/>
        <end position="112"/>
    </location>
</feature>
<feature type="transmembrane region" description="Helical" evidence="1">
    <location>
        <begin position="115"/>
        <end position="135"/>
    </location>
</feature>
<feature type="transmembrane region" description="Helical" evidence="1">
    <location>
        <begin position="146"/>
        <end position="166"/>
    </location>
</feature>
<feature type="transmembrane region" description="Helical" evidence="1">
    <location>
        <begin position="173"/>
        <end position="193"/>
    </location>
</feature>
<feature type="transmembrane region" description="Helical" evidence="1">
    <location>
        <begin position="224"/>
        <end position="244"/>
    </location>
</feature>
<feature type="transmembrane region" description="Helical" evidence="1">
    <location>
        <begin position="256"/>
        <end position="276"/>
    </location>
</feature>
<feature type="transmembrane region" description="Helical" evidence="1">
    <location>
        <begin position="290"/>
        <end position="310"/>
    </location>
</feature>
<feature type="transmembrane region" description="Helical" evidence="1">
    <location>
        <begin position="319"/>
        <end position="339"/>
    </location>
</feature>
<feature type="transmembrane region" description="Helical" evidence="1">
    <location>
        <begin position="378"/>
        <end position="398"/>
    </location>
</feature>
<sequence>MSPCENDTPINWKRNLIVAWLGCFLTGAAFSLVMPFLPLYVEQLGVTGHSALNMWSGIVFSITFLFSAIASPFWGGLADRKGRKLMLLRSALGMGIVMVLMGLAQNIWQFLILRALLGLLGGFVPNANALIATQVPRNKSGWALGTLSTGGVSGALLGPMAGGLLADSYGLRPVFFITASVLILCFFVTLFCIREKFQPVSKKEMLHMREVVTSLKNPKLVLSLFVTTLIIQVATGSIAPILTLYVRELAGNVSNVAFISGMIASVPGVAALLSAPRLGKLGDRIGPEKILITALIFSVLLLIPMSYVQTPLQLGILRFLLGAADGALLPAVQTLLVYNSSNQIAGRIFSYNQSFRDIGNVTGPLMGAAISANYGFRAVFLVTAGVVLFNAVYSWNSLRRRRIPQISN</sequence>
<reference key="1">
    <citation type="journal article" date="2007" name="J. Bacteriol.">
        <title>The genome sequence of avian pathogenic Escherichia coli strain O1:K1:H7 shares strong similarities with human extraintestinal pathogenic E. coli genomes.</title>
        <authorList>
            <person name="Johnson T.J."/>
            <person name="Kariyawasam S."/>
            <person name="Wannemuehler Y."/>
            <person name="Mangiamele P."/>
            <person name="Johnson S.J."/>
            <person name="Doetkott C."/>
            <person name="Skyberg J.A."/>
            <person name="Lynne A.M."/>
            <person name="Johnson J.R."/>
            <person name="Nolan L.K."/>
        </authorList>
    </citation>
    <scope>NUCLEOTIDE SEQUENCE [LARGE SCALE GENOMIC DNA]</scope>
</reference>
<proteinExistence type="inferred from homology"/>
<keyword id="KW-0046">Antibiotic resistance</keyword>
<keyword id="KW-0997">Cell inner membrane</keyword>
<keyword id="KW-1003">Cell membrane</keyword>
<keyword id="KW-0472">Membrane</keyword>
<keyword id="KW-1185">Reference proteome</keyword>
<keyword id="KW-0812">Transmembrane</keyword>
<keyword id="KW-1133">Transmembrane helix</keyword>
<keyword id="KW-0813">Transport</keyword>